<proteinExistence type="predicted"/>
<gene>
    <name type="primary">rfbX</name>
    <name type="ordered locus">STY2297</name>
    <name type="ordered locus">t0785</name>
</gene>
<comment type="function">
    <text>May be involved in the translocation process of the nascent O-polysaccharide molecules and/or its ligation to lipid A core units.</text>
</comment>
<comment type="pathway">
    <text>Bacterial outer membrane biogenesis; LPS O-antigen biosynthesis.</text>
</comment>
<comment type="subcellular location">
    <subcellularLocation>
        <location evidence="2">Cell inner membrane</location>
        <topology evidence="2">Multi-pass membrane protein</topology>
    </subcellularLocation>
</comment>
<feature type="chain" id="PRO_0000097295" description="Putative O-antigen transporter">
    <location>
        <begin position="1"/>
        <end position="432"/>
    </location>
</feature>
<feature type="transmembrane region" description="Helical" evidence="1">
    <location>
        <begin position="14"/>
        <end position="34"/>
    </location>
</feature>
<feature type="transmembrane region" description="Helical" evidence="1">
    <location>
        <begin position="47"/>
        <end position="67"/>
    </location>
</feature>
<feature type="transmembrane region" description="Helical" evidence="1">
    <location>
        <begin position="90"/>
        <end position="110"/>
    </location>
</feature>
<feature type="transmembrane region" description="Helical" evidence="1">
    <location>
        <begin position="134"/>
        <end position="154"/>
    </location>
</feature>
<feature type="transmembrane region" description="Helical" evidence="1">
    <location>
        <begin position="164"/>
        <end position="184"/>
    </location>
</feature>
<feature type="transmembrane region" description="Helical" evidence="1">
    <location>
        <begin position="189"/>
        <end position="209"/>
    </location>
</feature>
<feature type="transmembrane region" description="Helical" evidence="1">
    <location>
        <begin position="234"/>
        <end position="254"/>
    </location>
</feature>
<feature type="transmembrane region" description="Helical" evidence="1">
    <location>
        <begin position="271"/>
        <end position="291"/>
    </location>
</feature>
<feature type="transmembrane region" description="Helical" evidence="1">
    <location>
        <begin position="305"/>
        <end position="325"/>
    </location>
</feature>
<feature type="transmembrane region" description="Helical" evidence="1">
    <location>
        <begin position="334"/>
        <end position="354"/>
    </location>
</feature>
<feature type="transmembrane region" description="Helical" evidence="1">
    <location>
        <begin position="376"/>
        <end position="396"/>
    </location>
</feature>
<feature type="transmembrane region" description="Helical" evidence="1">
    <location>
        <begin position="400"/>
        <end position="420"/>
    </location>
</feature>
<dbReference type="EMBL" id="M65054">
    <property type="protein sequence ID" value="AAB49394.1"/>
    <property type="molecule type" value="Genomic_DNA"/>
</dbReference>
<dbReference type="EMBL" id="AL513382">
    <property type="protein sequence ID" value="CAD02450.1"/>
    <property type="molecule type" value="Genomic_DNA"/>
</dbReference>
<dbReference type="EMBL" id="AE014613">
    <property type="protein sequence ID" value="AAO68476.1"/>
    <property type="molecule type" value="Genomic_DNA"/>
</dbReference>
<dbReference type="PIR" id="A42476">
    <property type="entry name" value="A42476"/>
</dbReference>
<dbReference type="RefSeq" id="NP_456636.1">
    <property type="nucleotide sequence ID" value="NC_003198.1"/>
</dbReference>
<dbReference type="RefSeq" id="WP_001228890.1">
    <property type="nucleotide sequence ID" value="NZ_WSUR01000002.1"/>
</dbReference>
<dbReference type="SMR" id="Q99191"/>
<dbReference type="STRING" id="220341.gene:17586205"/>
<dbReference type="KEGG" id="stt:t0785"/>
<dbReference type="KEGG" id="sty:STY2297"/>
<dbReference type="PATRIC" id="fig|220341.7.peg.2317"/>
<dbReference type="eggNOG" id="COG2244">
    <property type="taxonomic scope" value="Bacteria"/>
</dbReference>
<dbReference type="HOGENOM" id="CLU_052342_0_0_6"/>
<dbReference type="OMA" id="TIICTMI"/>
<dbReference type="OrthoDB" id="7554306at2"/>
<dbReference type="BioCyc" id="MetaCyc:MONOMER-21441"/>
<dbReference type="UniPathway" id="UPA00281"/>
<dbReference type="Proteomes" id="UP000000541">
    <property type="component" value="Chromosome"/>
</dbReference>
<dbReference type="Proteomes" id="UP000002670">
    <property type="component" value="Chromosome"/>
</dbReference>
<dbReference type="GO" id="GO:0005886">
    <property type="term" value="C:plasma membrane"/>
    <property type="evidence" value="ECO:0007669"/>
    <property type="project" value="UniProtKB-SubCell"/>
</dbReference>
<dbReference type="GO" id="GO:0009243">
    <property type="term" value="P:O antigen biosynthetic process"/>
    <property type="evidence" value="ECO:0007669"/>
    <property type="project" value="UniProtKB-UniPathway"/>
</dbReference>
<dbReference type="CDD" id="cd12082">
    <property type="entry name" value="MATE_like"/>
    <property type="match status" value="1"/>
</dbReference>
<dbReference type="InterPro" id="IPR050833">
    <property type="entry name" value="Poly_Biosynth_Transport"/>
</dbReference>
<dbReference type="PANTHER" id="PTHR30250:SF11">
    <property type="entry name" value="O-ANTIGEN TRANSPORTER-RELATED"/>
    <property type="match status" value="1"/>
</dbReference>
<dbReference type="PANTHER" id="PTHR30250">
    <property type="entry name" value="PST FAMILY PREDICTED COLANIC ACID TRANSPORTER"/>
    <property type="match status" value="1"/>
</dbReference>
<organism>
    <name type="scientific">Salmonella typhi</name>
    <dbReference type="NCBI Taxonomy" id="90370"/>
    <lineage>
        <taxon>Bacteria</taxon>
        <taxon>Pseudomonadati</taxon>
        <taxon>Pseudomonadota</taxon>
        <taxon>Gammaproteobacteria</taxon>
        <taxon>Enterobacterales</taxon>
        <taxon>Enterobacteriaceae</taxon>
        <taxon>Salmonella</taxon>
    </lineage>
</organism>
<protein>
    <recommendedName>
        <fullName>Putative O-antigen transporter</fullName>
    </recommendedName>
</protein>
<evidence type="ECO:0000255" key="1"/>
<evidence type="ECO:0000305" key="2"/>
<name>RFBX_SALTI</name>
<sequence>MRKLRLVRIPRHLIIAASSWLSKIIIAGVQLVSVKFLLEILGEESYAVFTLLTGLLVWFSIADIGIGSSLQNYISELKADRKSYDAYIKAAVHILFASLIILSSTLFFLSDKLSSLYLTSFSDELKNNSGSYFFIASILFIFIGVGSVVYKILFAELLGWKANIINALSYLLGFLDVVAIHYLMPDSSITFALVALYAPVAILPIIYISFRYIYVLKAKVNFNTYKLLLSRSSGFLIFSSLSIIVLQTDYIVMSQKLSAADIIKYTVTMKIFGLMFFIYTAVLQALWPVCAELRVKMQWRKLHRIIFLNIIGGVFFIGLGTLFIYVLKDYIYSIIANGIDYNISGVVFVLLAVYFSIRVWCDTFAMLLQSMNQLKILWLIVPCQALIGGVTQWYFAEHYGIVGILYGLILSFSLTVFWGLPVYYMYKSKRLA</sequence>
<reference key="1">
    <citation type="journal article" date="1991" name="J. Bacteriol.">
        <title>Relationships among the rfb regions of Salmonella serovars A, B, and D.</title>
        <authorList>
            <person name="Liu D."/>
            <person name="Verma N.K."/>
            <person name="Romana L.K."/>
            <person name="Reeves P.R."/>
        </authorList>
    </citation>
    <scope>NUCLEOTIDE SEQUENCE [GENOMIC DNA]</scope>
    <source>
        <strain>ATCC 700931 / Ty2</strain>
    </source>
</reference>
<reference key="2">
    <citation type="journal article" date="1993" name="Trends Genet.">
        <title>Evolution of Salmonella O antigen variation by interspecific gene transfer on a large scale.</title>
        <authorList>
            <person name="Reeves P.R."/>
        </authorList>
    </citation>
    <scope>NUCLEOTIDE SEQUENCE [GENOMIC DNA]</scope>
    <source>
        <strain>ATCC 700931 / Ty2</strain>
    </source>
</reference>
<reference key="3">
    <citation type="journal article" date="2001" name="Nature">
        <title>Complete genome sequence of a multiple drug resistant Salmonella enterica serovar Typhi CT18.</title>
        <authorList>
            <person name="Parkhill J."/>
            <person name="Dougan G."/>
            <person name="James K.D."/>
            <person name="Thomson N.R."/>
            <person name="Pickard D."/>
            <person name="Wain J."/>
            <person name="Churcher C.M."/>
            <person name="Mungall K.L."/>
            <person name="Bentley S.D."/>
            <person name="Holden M.T.G."/>
            <person name="Sebaihia M."/>
            <person name="Baker S."/>
            <person name="Basham D."/>
            <person name="Brooks K."/>
            <person name="Chillingworth T."/>
            <person name="Connerton P."/>
            <person name="Cronin A."/>
            <person name="Davis P."/>
            <person name="Davies R.M."/>
            <person name="Dowd L."/>
            <person name="White N."/>
            <person name="Farrar J."/>
            <person name="Feltwell T."/>
            <person name="Hamlin N."/>
            <person name="Haque A."/>
            <person name="Hien T.T."/>
            <person name="Holroyd S."/>
            <person name="Jagels K."/>
            <person name="Krogh A."/>
            <person name="Larsen T.S."/>
            <person name="Leather S."/>
            <person name="Moule S."/>
            <person name="O'Gaora P."/>
            <person name="Parry C."/>
            <person name="Quail M.A."/>
            <person name="Rutherford K.M."/>
            <person name="Simmonds M."/>
            <person name="Skelton J."/>
            <person name="Stevens K."/>
            <person name="Whitehead S."/>
            <person name="Barrell B.G."/>
        </authorList>
    </citation>
    <scope>NUCLEOTIDE SEQUENCE [LARGE SCALE GENOMIC DNA]</scope>
    <source>
        <strain>CT18</strain>
    </source>
</reference>
<reference key="4">
    <citation type="journal article" date="2003" name="J. Bacteriol.">
        <title>Comparative genomics of Salmonella enterica serovar Typhi strains Ty2 and CT18.</title>
        <authorList>
            <person name="Deng W."/>
            <person name="Liou S.-R."/>
            <person name="Plunkett G. III"/>
            <person name="Mayhew G.F."/>
            <person name="Rose D.J."/>
            <person name="Burland V."/>
            <person name="Kodoyianni V."/>
            <person name="Schwartz D.C."/>
            <person name="Blattner F.R."/>
        </authorList>
    </citation>
    <scope>NUCLEOTIDE SEQUENCE [LARGE SCALE GENOMIC DNA]</scope>
    <source>
        <strain>ATCC 700931 / Ty2</strain>
    </source>
</reference>
<keyword id="KW-0997">Cell inner membrane</keyword>
<keyword id="KW-1003">Cell membrane</keyword>
<keyword id="KW-0448">Lipopolysaccharide biosynthesis</keyword>
<keyword id="KW-0472">Membrane</keyword>
<keyword id="KW-0812">Transmembrane</keyword>
<keyword id="KW-1133">Transmembrane helix</keyword>
<keyword id="KW-0813">Transport</keyword>
<accession>Q99191</accession>